<proteinExistence type="inferred from homology"/>
<accession>C4ZTA0</accession>
<evidence type="ECO:0000255" key="1">
    <source>
        <dbReference type="HAMAP-Rule" id="MF_00412"/>
    </source>
</evidence>
<protein>
    <recommendedName>
        <fullName evidence="1">Gamma-glutamyl phosphate reductase</fullName>
        <shortName evidence="1">GPR</shortName>
        <ecNumber evidence="1">1.2.1.41</ecNumber>
    </recommendedName>
    <alternativeName>
        <fullName evidence="1">Glutamate-5-semialdehyde dehydrogenase</fullName>
    </alternativeName>
    <alternativeName>
        <fullName evidence="1">Glutamyl-gamma-semialdehyde dehydrogenase</fullName>
        <shortName evidence="1">GSA dehydrogenase</shortName>
    </alternativeName>
</protein>
<feature type="chain" id="PRO_1000205994" description="Gamma-glutamyl phosphate reductase">
    <location>
        <begin position="1"/>
        <end position="417"/>
    </location>
</feature>
<name>PROA_ECOBW</name>
<dbReference type="EC" id="1.2.1.41" evidence="1"/>
<dbReference type="EMBL" id="CP001396">
    <property type="protein sequence ID" value="ACR63280.1"/>
    <property type="molecule type" value="Genomic_DNA"/>
</dbReference>
<dbReference type="RefSeq" id="WP_000893278.1">
    <property type="nucleotide sequence ID" value="NC_012759.1"/>
</dbReference>
<dbReference type="SMR" id="C4ZTA0"/>
<dbReference type="GeneID" id="93777150"/>
<dbReference type="KEGG" id="ebw:BWG_0225"/>
<dbReference type="HOGENOM" id="CLU_030231_0_0_6"/>
<dbReference type="UniPathway" id="UPA00098">
    <property type="reaction ID" value="UER00360"/>
</dbReference>
<dbReference type="GO" id="GO:0005737">
    <property type="term" value="C:cytoplasm"/>
    <property type="evidence" value="ECO:0007669"/>
    <property type="project" value="UniProtKB-SubCell"/>
</dbReference>
<dbReference type="GO" id="GO:0004350">
    <property type="term" value="F:glutamate-5-semialdehyde dehydrogenase activity"/>
    <property type="evidence" value="ECO:0007669"/>
    <property type="project" value="UniProtKB-UniRule"/>
</dbReference>
<dbReference type="GO" id="GO:0050661">
    <property type="term" value="F:NADP binding"/>
    <property type="evidence" value="ECO:0007669"/>
    <property type="project" value="InterPro"/>
</dbReference>
<dbReference type="GO" id="GO:0055129">
    <property type="term" value="P:L-proline biosynthetic process"/>
    <property type="evidence" value="ECO:0007669"/>
    <property type="project" value="UniProtKB-UniRule"/>
</dbReference>
<dbReference type="CDD" id="cd07079">
    <property type="entry name" value="ALDH_F18-19_ProA-GPR"/>
    <property type="match status" value="1"/>
</dbReference>
<dbReference type="FunFam" id="3.40.309.10:FF:000006">
    <property type="entry name" value="Gamma-glutamyl phosphate reductase"/>
    <property type="match status" value="1"/>
</dbReference>
<dbReference type="Gene3D" id="3.40.605.10">
    <property type="entry name" value="Aldehyde Dehydrogenase, Chain A, domain 1"/>
    <property type="match status" value="1"/>
</dbReference>
<dbReference type="Gene3D" id="3.40.309.10">
    <property type="entry name" value="Aldehyde Dehydrogenase, Chain A, domain 2"/>
    <property type="match status" value="1"/>
</dbReference>
<dbReference type="HAMAP" id="MF_00412">
    <property type="entry name" value="ProA"/>
    <property type="match status" value="1"/>
</dbReference>
<dbReference type="InterPro" id="IPR016161">
    <property type="entry name" value="Ald_DH/histidinol_DH"/>
</dbReference>
<dbReference type="InterPro" id="IPR016163">
    <property type="entry name" value="Ald_DH_C"/>
</dbReference>
<dbReference type="InterPro" id="IPR016162">
    <property type="entry name" value="Ald_DH_N"/>
</dbReference>
<dbReference type="InterPro" id="IPR015590">
    <property type="entry name" value="Aldehyde_DH_dom"/>
</dbReference>
<dbReference type="InterPro" id="IPR020593">
    <property type="entry name" value="G-glutamylP_reductase_CS"/>
</dbReference>
<dbReference type="InterPro" id="IPR012134">
    <property type="entry name" value="Glu-5-SA_DH"/>
</dbReference>
<dbReference type="InterPro" id="IPR000965">
    <property type="entry name" value="GPR_dom"/>
</dbReference>
<dbReference type="NCBIfam" id="NF001221">
    <property type="entry name" value="PRK00197.1"/>
    <property type="match status" value="1"/>
</dbReference>
<dbReference type="NCBIfam" id="TIGR00407">
    <property type="entry name" value="proA"/>
    <property type="match status" value="1"/>
</dbReference>
<dbReference type="PANTHER" id="PTHR11063:SF8">
    <property type="entry name" value="DELTA-1-PYRROLINE-5-CARBOXYLATE SYNTHASE"/>
    <property type="match status" value="1"/>
</dbReference>
<dbReference type="PANTHER" id="PTHR11063">
    <property type="entry name" value="GLUTAMATE SEMIALDEHYDE DEHYDROGENASE"/>
    <property type="match status" value="1"/>
</dbReference>
<dbReference type="Pfam" id="PF00171">
    <property type="entry name" value="Aldedh"/>
    <property type="match status" value="1"/>
</dbReference>
<dbReference type="PIRSF" id="PIRSF000151">
    <property type="entry name" value="GPR"/>
    <property type="match status" value="1"/>
</dbReference>
<dbReference type="SUPFAM" id="SSF53720">
    <property type="entry name" value="ALDH-like"/>
    <property type="match status" value="1"/>
</dbReference>
<dbReference type="PROSITE" id="PS01223">
    <property type="entry name" value="PROA"/>
    <property type="match status" value="1"/>
</dbReference>
<reference key="1">
    <citation type="journal article" date="2009" name="J. Bacteriol.">
        <title>Genomic sequencing reveals regulatory mutations and recombinational events in the widely used MC4100 lineage of Escherichia coli K-12.</title>
        <authorList>
            <person name="Ferenci T."/>
            <person name="Zhou Z."/>
            <person name="Betteridge T."/>
            <person name="Ren Y."/>
            <person name="Liu Y."/>
            <person name="Feng L."/>
            <person name="Reeves P.R."/>
            <person name="Wang L."/>
        </authorList>
    </citation>
    <scope>NUCLEOTIDE SEQUENCE [LARGE SCALE GENOMIC DNA]</scope>
    <source>
        <strain>K12 / MC4100 / BW2952</strain>
    </source>
</reference>
<keyword id="KW-0028">Amino-acid biosynthesis</keyword>
<keyword id="KW-0963">Cytoplasm</keyword>
<keyword id="KW-0521">NADP</keyword>
<keyword id="KW-0560">Oxidoreductase</keyword>
<keyword id="KW-0641">Proline biosynthesis</keyword>
<gene>
    <name evidence="1" type="primary">proA</name>
    <name type="ordered locus">BWG_0225</name>
</gene>
<comment type="function">
    <text evidence="1">Catalyzes the NADPH-dependent reduction of L-glutamate 5-phosphate into L-glutamate 5-semialdehyde and phosphate. The product spontaneously undergoes cyclization to form 1-pyrroline-5-carboxylate.</text>
</comment>
<comment type="catalytic activity">
    <reaction evidence="1">
        <text>L-glutamate 5-semialdehyde + phosphate + NADP(+) = L-glutamyl 5-phosphate + NADPH + H(+)</text>
        <dbReference type="Rhea" id="RHEA:19541"/>
        <dbReference type="ChEBI" id="CHEBI:15378"/>
        <dbReference type="ChEBI" id="CHEBI:43474"/>
        <dbReference type="ChEBI" id="CHEBI:57783"/>
        <dbReference type="ChEBI" id="CHEBI:58066"/>
        <dbReference type="ChEBI" id="CHEBI:58274"/>
        <dbReference type="ChEBI" id="CHEBI:58349"/>
        <dbReference type="EC" id="1.2.1.41"/>
    </reaction>
</comment>
<comment type="pathway">
    <text evidence="1">Amino-acid biosynthesis; L-proline biosynthesis; L-glutamate 5-semialdehyde from L-glutamate: step 2/2.</text>
</comment>
<comment type="subcellular location">
    <subcellularLocation>
        <location evidence="1">Cytoplasm</location>
    </subcellularLocation>
</comment>
<comment type="similarity">
    <text evidence="1">Belongs to the gamma-glutamyl phosphate reductase family.</text>
</comment>
<organism>
    <name type="scientific">Escherichia coli (strain K12 / MC4100 / BW2952)</name>
    <dbReference type="NCBI Taxonomy" id="595496"/>
    <lineage>
        <taxon>Bacteria</taxon>
        <taxon>Pseudomonadati</taxon>
        <taxon>Pseudomonadota</taxon>
        <taxon>Gammaproteobacteria</taxon>
        <taxon>Enterobacterales</taxon>
        <taxon>Enterobacteriaceae</taxon>
        <taxon>Escherichia</taxon>
    </lineage>
</organism>
<sequence length="417" mass="44630">MLEQMGIAAKQASYKLAQLSSREKNRVLEKIADELEAQSEIILNANAQDVADARANGLSEAMLDRLALTPARLKGIADDVRQVCNLADPVGQVIDGGVLDSGLRLERRRVPLGVIGVIYEARPNVTVDVASLCLKTGNAVILRGGKETCRTNAATVAVIQDALKSCGLPAGAVQAIDNPDRALVSEMLRMDKYIDMLIPRGGAGLHKLCREQSTIPVITGGIGVCHIYVDESVEIAEALKVIVNAKTQRPSTCNTVETLLVNKNIADSFLPALSKQMAESGVTLHADAAALAQLQAGPAKVVAVKAEEYDDEFLSLDLNVKIVSDLDDAIAHIREHGTQHSDAILTRDMRNAQRFVNEVDSSAVYVNASTRFTDGGQFGLGAEVAVSTQKLHARGPMGLEALTTYKWIGIGDYTIRA</sequence>